<proteinExistence type="inferred from homology"/>
<evidence type="ECO:0000250" key="1"/>
<evidence type="ECO:0000256" key="2">
    <source>
        <dbReference type="SAM" id="MobiDB-lite"/>
    </source>
</evidence>
<evidence type="ECO:0000305" key="3"/>
<sequence>MSATTDAGQLAEFNRCSTAEQYFDLLEVDYDPRVVAVNRLHILKHFAGELAKLQDAGADTENPRHLLRDYRDALVRSYEAFTNAGALDHRLFKVLKDRAPQAADFVPTSEITVQRPGSTQPSETSERTEEAR</sequence>
<comment type="function">
    <text evidence="1">May protect the nitrogenase Fe-Mo protein from oxidative damage.</text>
</comment>
<comment type="subunit">
    <text evidence="1">Homotrimer; associates with NifD.</text>
</comment>
<comment type="similarity">
    <text evidence="3">Belongs to the NifW family.</text>
</comment>
<feature type="chain" id="PRO_0000219531" description="Nitrogenase-stabilizing/protective protein NifW">
    <location>
        <begin position="1"/>
        <end position="132"/>
    </location>
</feature>
<feature type="region of interest" description="Disordered" evidence="2">
    <location>
        <begin position="106"/>
        <end position="132"/>
    </location>
</feature>
<feature type="compositionally biased region" description="Polar residues" evidence="2">
    <location>
        <begin position="109"/>
        <end position="123"/>
    </location>
</feature>
<accession>P46039</accession>
<keyword id="KW-0535">Nitrogen fixation</keyword>
<protein>
    <recommendedName>
        <fullName>Nitrogenase-stabilizing/protective protein NifW</fullName>
    </recommendedName>
</protein>
<dbReference type="EMBL" id="L29299">
    <property type="protein sequence ID" value="AAC82973.1"/>
    <property type="molecule type" value="Genomic_DNA"/>
</dbReference>
<dbReference type="PIR" id="T09235">
    <property type="entry name" value="T09235"/>
</dbReference>
<dbReference type="GO" id="GO:0009399">
    <property type="term" value="P:nitrogen fixation"/>
    <property type="evidence" value="ECO:0007669"/>
    <property type="project" value="UniProtKB-UniRule"/>
</dbReference>
<dbReference type="HAMAP" id="MF_00529">
    <property type="entry name" value="NifW"/>
    <property type="match status" value="1"/>
</dbReference>
<dbReference type="InterPro" id="IPR004893">
    <property type="entry name" value="NifW"/>
</dbReference>
<dbReference type="Pfam" id="PF03206">
    <property type="entry name" value="NifW"/>
    <property type="match status" value="1"/>
</dbReference>
<dbReference type="PIRSF" id="PIRSF005790">
    <property type="entry name" value="NifW"/>
    <property type="match status" value="1"/>
</dbReference>
<name>NIFW_FRAAL</name>
<organism>
    <name type="scientific">Frankia alni</name>
    <dbReference type="NCBI Taxonomy" id="1859"/>
    <lineage>
        <taxon>Bacteria</taxon>
        <taxon>Bacillati</taxon>
        <taxon>Actinomycetota</taxon>
        <taxon>Actinomycetes</taxon>
        <taxon>Frankiales</taxon>
        <taxon>Frankiaceae</taxon>
        <taxon>Frankia</taxon>
    </lineage>
</organism>
<reference key="1">
    <citation type="journal article" date="1995" name="Gene">
        <title>Sequences of nifX, nifW, nifZ, nifB and two ORF in the Frankia nitrogen fixation gene cluster.</title>
        <authorList>
            <person name="Harriott O.T."/>
            <person name="Hosted T.J."/>
            <person name="Benson D.R."/>
        </authorList>
    </citation>
    <scope>NUCLEOTIDE SEQUENCE [GENOMIC DNA]</scope>
    <source>
        <strain>CpI1</strain>
    </source>
</reference>
<gene>
    <name type="primary">nifW</name>
</gene>